<comment type="subcellular location">
    <subcellularLocation>
        <location evidence="1">Mitochondrion</location>
    </subcellularLocation>
</comment>
<feature type="chain" id="PRO_0000304089" description="Uncharacterized protein C1703.09">
    <location>
        <begin position="1"/>
        <end position="202"/>
    </location>
</feature>
<sequence length="202" mass="23037">MQDNQVLANTASMIMPKSSFITTKQLWEIVLQGKVEATEFIPADVSDSTQTVDRSNKISPITSQLTIEPNKSQTIVKKNPDNLIFVAVNQNVQLQLSILKQQQNRVAAMESALQRIHLEITAMSEQLILQKYQKNRFFFMSSINALIRISRNCIKLLFKNSLVLLAACYFMNTTPSRLVINLIRSGYLILKRFANPSYISFY</sequence>
<keyword id="KW-0496">Mitochondrion</keyword>
<keyword id="KW-1185">Reference proteome</keyword>
<evidence type="ECO:0000269" key="1">
    <source>
    </source>
</evidence>
<name>YGQ9_SCHPO</name>
<organism>
    <name type="scientific">Schizosaccharomyces pombe (strain 972 / ATCC 24843)</name>
    <name type="common">Fission yeast</name>
    <dbReference type="NCBI Taxonomy" id="284812"/>
    <lineage>
        <taxon>Eukaryota</taxon>
        <taxon>Fungi</taxon>
        <taxon>Dikarya</taxon>
        <taxon>Ascomycota</taxon>
        <taxon>Taphrinomycotina</taxon>
        <taxon>Schizosaccharomycetes</taxon>
        <taxon>Schizosaccharomycetales</taxon>
        <taxon>Schizosaccharomycetaceae</taxon>
        <taxon>Schizosaccharomyces</taxon>
    </lineage>
</organism>
<proteinExistence type="predicted"/>
<dbReference type="EMBL" id="CU329671">
    <property type="protein sequence ID" value="CAB66453.1"/>
    <property type="molecule type" value="Genomic_DNA"/>
</dbReference>
<dbReference type="PIR" id="T50322">
    <property type="entry name" value="T50322"/>
</dbReference>
<dbReference type="RefSeq" id="NP_596204.1">
    <property type="nucleotide sequence ID" value="NM_001022123.2"/>
</dbReference>
<dbReference type="SMR" id="Q9P7W1"/>
<dbReference type="BioGRID" id="276319">
    <property type="interactions" value="12"/>
</dbReference>
<dbReference type="PaxDb" id="4896-SPBC1703.09.1"/>
<dbReference type="EnsemblFungi" id="SPBC1703.09.1">
    <property type="protein sequence ID" value="SPBC1703.09.1:pep"/>
    <property type="gene ID" value="SPBC1703.09"/>
</dbReference>
<dbReference type="KEGG" id="spo:2539768"/>
<dbReference type="PomBase" id="SPBC1703.09"/>
<dbReference type="VEuPathDB" id="FungiDB:SPBC1703.09"/>
<dbReference type="HOGENOM" id="CLU_1355358_0_0_1"/>
<dbReference type="InParanoid" id="Q9P7W1"/>
<dbReference type="OMA" id="ACYFMKS"/>
<dbReference type="PRO" id="PR:Q9P7W1"/>
<dbReference type="Proteomes" id="UP000002485">
    <property type="component" value="Chromosome II"/>
</dbReference>
<dbReference type="GO" id="GO:0005739">
    <property type="term" value="C:mitochondrion"/>
    <property type="evidence" value="ECO:0007005"/>
    <property type="project" value="PomBase"/>
</dbReference>
<accession>Q9P7W1</accession>
<gene>
    <name type="ORF">SPBC1703.09</name>
</gene>
<reference key="1">
    <citation type="journal article" date="2002" name="Nature">
        <title>The genome sequence of Schizosaccharomyces pombe.</title>
        <authorList>
            <person name="Wood V."/>
            <person name="Gwilliam R."/>
            <person name="Rajandream M.A."/>
            <person name="Lyne M.H."/>
            <person name="Lyne R."/>
            <person name="Stewart A."/>
            <person name="Sgouros J.G."/>
            <person name="Peat N."/>
            <person name="Hayles J."/>
            <person name="Baker S.G."/>
            <person name="Basham D."/>
            <person name="Bowman S."/>
            <person name="Brooks K."/>
            <person name="Brown D."/>
            <person name="Brown S."/>
            <person name="Chillingworth T."/>
            <person name="Churcher C.M."/>
            <person name="Collins M."/>
            <person name="Connor R."/>
            <person name="Cronin A."/>
            <person name="Davis P."/>
            <person name="Feltwell T."/>
            <person name="Fraser A."/>
            <person name="Gentles S."/>
            <person name="Goble A."/>
            <person name="Hamlin N."/>
            <person name="Harris D.E."/>
            <person name="Hidalgo J."/>
            <person name="Hodgson G."/>
            <person name="Holroyd S."/>
            <person name="Hornsby T."/>
            <person name="Howarth S."/>
            <person name="Huckle E.J."/>
            <person name="Hunt S."/>
            <person name="Jagels K."/>
            <person name="James K.D."/>
            <person name="Jones L."/>
            <person name="Jones M."/>
            <person name="Leather S."/>
            <person name="McDonald S."/>
            <person name="McLean J."/>
            <person name="Mooney P."/>
            <person name="Moule S."/>
            <person name="Mungall K.L."/>
            <person name="Murphy L.D."/>
            <person name="Niblett D."/>
            <person name="Odell C."/>
            <person name="Oliver K."/>
            <person name="O'Neil S."/>
            <person name="Pearson D."/>
            <person name="Quail M.A."/>
            <person name="Rabbinowitsch E."/>
            <person name="Rutherford K.M."/>
            <person name="Rutter S."/>
            <person name="Saunders D."/>
            <person name="Seeger K."/>
            <person name="Sharp S."/>
            <person name="Skelton J."/>
            <person name="Simmonds M.N."/>
            <person name="Squares R."/>
            <person name="Squares S."/>
            <person name="Stevens K."/>
            <person name="Taylor K."/>
            <person name="Taylor R.G."/>
            <person name="Tivey A."/>
            <person name="Walsh S.V."/>
            <person name="Warren T."/>
            <person name="Whitehead S."/>
            <person name="Woodward J.R."/>
            <person name="Volckaert G."/>
            <person name="Aert R."/>
            <person name="Robben J."/>
            <person name="Grymonprez B."/>
            <person name="Weltjens I."/>
            <person name="Vanstreels E."/>
            <person name="Rieger M."/>
            <person name="Schaefer M."/>
            <person name="Mueller-Auer S."/>
            <person name="Gabel C."/>
            <person name="Fuchs M."/>
            <person name="Duesterhoeft A."/>
            <person name="Fritzc C."/>
            <person name="Holzer E."/>
            <person name="Moestl D."/>
            <person name="Hilbert H."/>
            <person name="Borzym K."/>
            <person name="Langer I."/>
            <person name="Beck A."/>
            <person name="Lehrach H."/>
            <person name="Reinhardt R."/>
            <person name="Pohl T.M."/>
            <person name="Eger P."/>
            <person name="Zimmermann W."/>
            <person name="Wedler H."/>
            <person name="Wambutt R."/>
            <person name="Purnelle B."/>
            <person name="Goffeau A."/>
            <person name="Cadieu E."/>
            <person name="Dreano S."/>
            <person name="Gloux S."/>
            <person name="Lelaure V."/>
            <person name="Mottier S."/>
            <person name="Galibert F."/>
            <person name="Aves S.J."/>
            <person name="Xiang Z."/>
            <person name="Hunt C."/>
            <person name="Moore K."/>
            <person name="Hurst S.M."/>
            <person name="Lucas M."/>
            <person name="Rochet M."/>
            <person name="Gaillardin C."/>
            <person name="Tallada V.A."/>
            <person name="Garzon A."/>
            <person name="Thode G."/>
            <person name="Daga R.R."/>
            <person name="Cruzado L."/>
            <person name="Jimenez J."/>
            <person name="Sanchez M."/>
            <person name="del Rey F."/>
            <person name="Benito J."/>
            <person name="Dominguez A."/>
            <person name="Revuelta J.L."/>
            <person name="Moreno S."/>
            <person name="Armstrong J."/>
            <person name="Forsburg S.L."/>
            <person name="Cerutti L."/>
            <person name="Lowe T."/>
            <person name="McCombie W.R."/>
            <person name="Paulsen I."/>
            <person name="Potashkin J."/>
            <person name="Shpakovski G.V."/>
            <person name="Ussery D."/>
            <person name="Barrell B.G."/>
            <person name="Nurse P."/>
        </authorList>
    </citation>
    <scope>NUCLEOTIDE SEQUENCE [LARGE SCALE GENOMIC DNA]</scope>
    <source>
        <strain>972 / ATCC 24843</strain>
    </source>
</reference>
<reference key="2">
    <citation type="journal article" date="2006" name="Nat. Biotechnol.">
        <title>ORFeome cloning and global analysis of protein localization in the fission yeast Schizosaccharomyces pombe.</title>
        <authorList>
            <person name="Matsuyama A."/>
            <person name="Arai R."/>
            <person name="Yashiroda Y."/>
            <person name="Shirai A."/>
            <person name="Kamata A."/>
            <person name="Sekido S."/>
            <person name="Kobayashi Y."/>
            <person name="Hashimoto A."/>
            <person name="Hamamoto M."/>
            <person name="Hiraoka Y."/>
            <person name="Horinouchi S."/>
            <person name="Yoshida M."/>
        </authorList>
    </citation>
    <scope>SUBCELLULAR LOCATION [LARGE SCALE ANALYSIS]</scope>
</reference>
<protein>
    <recommendedName>
        <fullName>Uncharacterized protein C1703.09</fullName>
    </recommendedName>
</protein>